<protein>
    <recommendedName>
        <fullName evidence="1">Ribosomal RNA small subunit methyltransferase A</fullName>
        <ecNumber evidence="1">2.1.1.182</ecNumber>
    </recommendedName>
    <alternativeName>
        <fullName evidence="1">16S rRNA (adenine(1518)-N(6)/adenine(1519)-N(6))-dimethyltransferase</fullName>
    </alternativeName>
    <alternativeName>
        <fullName evidence="1">16S rRNA dimethyladenosine transferase</fullName>
    </alternativeName>
    <alternativeName>
        <fullName evidence="1">16S rRNA dimethylase</fullName>
    </alternativeName>
    <alternativeName>
        <fullName evidence="1">S-adenosylmethionine-6-N', N'-adenosyl(rRNA) dimethyltransferase</fullName>
    </alternativeName>
</protein>
<accession>Q9CLL5</accession>
<keyword id="KW-0963">Cytoplasm</keyword>
<keyword id="KW-0489">Methyltransferase</keyword>
<keyword id="KW-1185">Reference proteome</keyword>
<keyword id="KW-0694">RNA-binding</keyword>
<keyword id="KW-0698">rRNA processing</keyword>
<keyword id="KW-0949">S-adenosyl-L-methionine</keyword>
<keyword id="KW-0808">Transferase</keyword>
<evidence type="ECO:0000255" key="1">
    <source>
        <dbReference type="HAMAP-Rule" id="MF_00607"/>
    </source>
</evidence>
<comment type="function">
    <text evidence="1">Specifically dimethylates two adjacent adenosines (A1518 and A1519) in the loop of a conserved hairpin near the 3'-end of 16S rRNA in the 30S particle. May play a critical role in biogenesis of 30S subunits.</text>
</comment>
<comment type="catalytic activity">
    <reaction evidence="1">
        <text>adenosine(1518)/adenosine(1519) in 16S rRNA + 4 S-adenosyl-L-methionine = N(6)-dimethyladenosine(1518)/N(6)-dimethyladenosine(1519) in 16S rRNA + 4 S-adenosyl-L-homocysteine + 4 H(+)</text>
        <dbReference type="Rhea" id="RHEA:19609"/>
        <dbReference type="Rhea" id="RHEA-COMP:10232"/>
        <dbReference type="Rhea" id="RHEA-COMP:10233"/>
        <dbReference type="ChEBI" id="CHEBI:15378"/>
        <dbReference type="ChEBI" id="CHEBI:57856"/>
        <dbReference type="ChEBI" id="CHEBI:59789"/>
        <dbReference type="ChEBI" id="CHEBI:74411"/>
        <dbReference type="ChEBI" id="CHEBI:74493"/>
        <dbReference type="EC" id="2.1.1.182"/>
    </reaction>
</comment>
<comment type="subcellular location">
    <subcellularLocation>
        <location evidence="1">Cytoplasm</location>
    </subcellularLocation>
</comment>
<comment type="similarity">
    <text evidence="1">Belongs to the class I-like SAM-binding methyltransferase superfamily. rRNA adenine N(6)-methyltransferase family. RsmA subfamily.</text>
</comment>
<sequence length="288" mass="32954">MNSKKHLGHTARKRFGQNFLHDNNVIHGIVSAIYPQKDQFLVEIGPGLGALTEPVGELVDHLTVVELDRDLAERLRHHPFLHHKITVIETDAMQFDFGQLYRDANLAEKKQKMRVFGNLPYNISTPLMFHLFKYHDCIQDMHFMLQKEVVKRLCAGPNSKAYGRLTIMAQYFCQVMPVLEVPPTAFKPAPKVDSAVVRLVPHKVLPHPVKDLYWLNRVCSQAFNQRRKTLRNALSTLFSADQLTELGIDLTARAENLSIADYARLANWLTDNPPADVNKDEMIEHLDD</sequence>
<name>RSMA_PASMU</name>
<reference key="1">
    <citation type="journal article" date="2001" name="Proc. Natl. Acad. Sci. U.S.A.">
        <title>Complete genomic sequence of Pasteurella multocida Pm70.</title>
        <authorList>
            <person name="May B.J."/>
            <person name="Zhang Q."/>
            <person name="Li L.L."/>
            <person name="Paustian M.L."/>
            <person name="Whittam T.S."/>
            <person name="Kapur V."/>
        </authorList>
    </citation>
    <scope>NUCLEOTIDE SEQUENCE [LARGE SCALE GENOMIC DNA]</scope>
    <source>
        <strain>Pm70</strain>
    </source>
</reference>
<organism>
    <name type="scientific">Pasteurella multocida (strain Pm70)</name>
    <dbReference type="NCBI Taxonomy" id="272843"/>
    <lineage>
        <taxon>Bacteria</taxon>
        <taxon>Pseudomonadati</taxon>
        <taxon>Pseudomonadota</taxon>
        <taxon>Gammaproteobacteria</taxon>
        <taxon>Pasteurellales</taxon>
        <taxon>Pasteurellaceae</taxon>
        <taxon>Pasteurella</taxon>
    </lineage>
</organism>
<gene>
    <name evidence="1" type="primary">rsmA</name>
    <name evidence="1" type="synonym">ksgA</name>
    <name type="ordered locus">PM1209</name>
</gene>
<feature type="chain" id="PRO_0000101578" description="Ribosomal RNA small subunit methyltransferase A">
    <location>
        <begin position="1"/>
        <end position="288"/>
    </location>
</feature>
<feature type="binding site" evidence="1">
    <location>
        <position position="18"/>
    </location>
    <ligand>
        <name>S-adenosyl-L-methionine</name>
        <dbReference type="ChEBI" id="CHEBI:59789"/>
    </ligand>
</feature>
<feature type="binding site" evidence="1">
    <location>
        <position position="20"/>
    </location>
    <ligand>
        <name>S-adenosyl-L-methionine</name>
        <dbReference type="ChEBI" id="CHEBI:59789"/>
    </ligand>
</feature>
<feature type="binding site" evidence="1">
    <location>
        <position position="45"/>
    </location>
    <ligand>
        <name>S-adenosyl-L-methionine</name>
        <dbReference type="ChEBI" id="CHEBI:59789"/>
    </ligand>
</feature>
<feature type="binding site" evidence="1">
    <location>
        <position position="66"/>
    </location>
    <ligand>
        <name>S-adenosyl-L-methionine</name>
        <dbReference type="ChEBI" id="CHEBI:59789"/>
    </ligand>
</feature>
<feature type="binding site" evidence="1">
    <location>
        <position position="91"/>
    </location>
    <ligand>
        <name>S-adenosyl-L-methionine</name>
        <dbReference type="ChEBI" id="CHEBI:59789"/>
    </ligand>
</feature>
<feature type="binding site" evidence="1">
    <location>
        <position position="118"/>
    </location>
    <ligand>
        <name>S-adenosyl-L-methionine</name>
        <dbReference type="ChEBI" id="CHEBI:59789"/>
    </ligand>
</feature>
<dbReference type="EC" id="2.1.1.182" evidence="1"/>
<dbReference type="EMBL" id="AE004439">
    <property type="protein sequence ID" value="AAK03293.1"/>
    <property type="molecule type" value="Genomic_DNA"/>
</dbReference>
<dbReference type="RefSeq" id="WP_005717594.1">
    <property type="nucleotide sequence ID" value="NC_002663.1"/>
</dbReference>
<dbReference type="SMR" id="Q9CLL5"/>
<dbReference type="STRING" id="272843.PM1209"/>
<dbReference type="EnsemblBacteria" id="AAK03293">
    <property type="protein sequence ID" value="AAK03293"/>
    <property type="gene ID" value="PM1209"/>
</dbReference>
<dbReference type="GeneID" id="77206526"/>
<dbReference type="KEGG" id="pmu:PM1209"/>
<dbReference type="HOGENOM" id="CLU_041220_0_1_6"/>
<dbReference type="OrthoDB" id="9814755at2"/>
<dbReference type="Proteomes" id="UP000000809">
    <property type="component" value="Chromosome"/>
</dbReference>
<dbReference type="GO" id="GO:0005829">
    <property type="term" value="C:cytosol"/>
    <property type="evidence" value="ECO:0007669"/>
    <property type="project" value="TreeGrafter"/>
</dbReference>
<dbReference type="GO" id="GO:0052908">
    <property type="term" value="F:16S rRNA (adenine(1518)-N(6)/adenine(1519)-N(6))-dimethyltransferase activity"/>
    <property type="evidence" value="ECO:0007669"/>
    <property type="project" value="UniProtKB-EC"/>
</dbReference>
<dbReference type="GO" id="GO:0003723">
    <property type="term" value="F:RNA binding"/>
    <property type="evidence" value="ECO:0007669"/>
    <property type="project" value="UniProtKB-KW"/>
</dbReference>
<dbReference type="FunFam" id="1.10.8.100:FF:000001">
    <property type="entry name" value="Ribosomal RNA small subunit methyltransferase A"/>
    <property type="match status" value="1"/>
</dbReference>
<dbReference type="FunFam" id="3.40.50.150:FF:000006">
    <property type="entry name" value="Ribosomal RNA small subunit methyltransferase A"/>
    <property type="match status" value="1"/>
</dbReference>
<dbReference type="Gene3D" id="1.10.8.100">
    <property type="entry name" value="Ribosomal RNA adenine dimethylase-like, domain 2"/>
    <property type="match status" value="1"/>
</dbReference>
<dbReference type="Gene3D" id="3.40.50.150">
    <property type="entry name" value="Vaccinia Virus protein VP39"/>
    <property type="match status" value="1"/>
</dbReference>
<dbReference type="HAMAP" id="MF_00607">
    <property type="entry name" value="16SrRNA_methyltr_A"/>
    <property type="match status" value="1"/>
</dbReference>
<dbReference type="InterPro" id="IPR001737">
    <property type="entry name" value="KsgA/Erm"/>
</dbReference>
<dbReference type="InterPro" id="IPR023165">
    <property type="entry name" value="rRNA_Ade_diMease-like_C"/>
</dbReference>
<dbReference type="InterPro" id="IPR020596">
    <property type="entry name" value="rRNA_Ade_Mease_Trfase_CS"/>
</dbReference>
<dbReference type="InterPro" id="IPR020598">
    <property type="entry name" value="rRNA_Ade_methylase_Trfase_N"/>
</dbReference>
<dbReference type="InterPro" id="IPR011530">
    <property type="entry name" value="rRNA_adenine_dimethylase"/>
</dbReference>
<dbReference type="InterPro" id="IPR029063">
    <property type="entry name" value="SAM-dependent_MTases_sf"/>
</dbReference>
<dbReference type="NCBIfam" id="TIGR00755">
    <property type="entry name" value="ksgA"/>
    <property type="match status" value="1"/>
</dbReference>
<dbReference type="PANTHER" id="PTHR11727">
    <property type="entry name" value="DIMETHYLADENOSINE TRANSFERASE"/>
    <property type="match status" value="1"/>
</dbReference>
<dbReference type="PANTHER" id="PTHR11727:SF7">
    <property type="entry name" value="DIMETHYLADENOSINE TRANSFERASE-RELATED"/>
    <property type="match status" value="1"/>
</dbReference>
<dbReference type="Pfam" id="PF00398">
    <property type="entry name" value="RrnaAD"/>
    <property type="match status" value="1"/>
</dbReference>
<dbReference type="SMART" id="SM00650">
    <property type="entry name" value="rADc"/>
    <property type="match status" value="1"/>
</dbReference>
<dbReference type="SUPFAM" id="SSF53335">
    <property type="entry name" value="S-adenosyl-L-methionine-dependent methyltransferases"/>
    <property type="match status" value="1"/>
</dbReference>
<dbReference type="PROSITE" id="PS01131">
    <property type="entry name" value="RRNA_A_DIMETH"/>
    <property type="match status" value="1"/>
</dbReference>
<dbReference type="PROSITE" id="PS51689">
    <property type="entry name" value="SAM_RNA_A_N6_MT"/>
    <property type="match status" value="1"/>
</dbReference>
<proteinExistence type="inferred from homology"/>